<feature type="chain" id="PRO_0000249053" description="Acyl-CoA wax alcohol acyltransferase 2">
    <location>
        <begin position="1"/>
        <end position="333"/>
    </location>
</feature>
<feature type="transmembrane region" description="Helical" evidence="2">
    <location>
        <begin position="15"/>
        <end position="35"/>
    </location>
</feature>
<feature type="transmembrane region" description="Helical" evidence="2">
    <location>
        <begin position="38"/>
        <end position="58"/>
    </location>
</feature>
<feature type="transmembrane region" description="Helical" evidence="2">
    <location>
        <begin position="130"/>
        <end position="150"/>
    </location>
</feature>
<feature type="splice variant" id="VSP_020357" description="In isoform 2." evidence="6">
    <location>
        <begin position="1"/>
        <end position="51"/>
    </location>
</feature>
<comment type="function">
    <text evidence="3 5">Acyltransferase that catalyzes the formation of ester bonds between fatty alcohols and fatty acyl-CoAs to form wax monoesters (PubMed:15220349). Shows a preference for medium chain acyl-CoAs from C12 to C16 in length and fatty alcohols shorter than C20, as the acyl donor and acceptor, respectively (PubMed:15220349). Also possesses fatty acyl-CoA retinol acyltransferase (ARAT) activity that preferentially esterifies 11-cis-retinol, a chromophore precursor of bleached opsin pigments in cone cells (PubMed:28096191). Shows higher catalytic efficiency toward 11-cis-retinol versus 9-cis-retinol, 13- cis-retinol and all-trans-retinol substrates.</text>
</comment>
<comment type="catalytic activity">
    <reaction evidence="3 5">
        <text>a long chain fatty alcohol + a fatty acyl-CoA = a wax ester + CoA</text>
        <dbReference type="Rhea" id="RHEA:38443"/>
        <dbReference type="ChEBI" id="CHEBI:10036"/>
        <dbReference type="ChEBI" id="CHEBI:17135"/>
        <dbReference type="ChEBI" id="CHEBI:57287"/>
        <dbReference type="ChEBI" id="CHEBI:77636"/>
        <dbReference type="EC" id="2.3.1.75"/>
    </reaction>
    <physiologicalReaction direction="left-to-right" evidence="9 10">
        <dbReference type="Rhea" id="RHEA:38444"/>
    </physiologicalReaction>
</comment>
<comment type="catalytic activity">
    <reaction evidence="5">
        <text>all-trans-retinol + an acyl-CoA = an all-trans-retinyl ester + CoA</text>
        <dbReference type="Rhea" id="RHEA:11488"/>
        <dbReference type="ChEBI" id="CHEBI:17336"/>
        <dbReference type="ChEBI" id="CHEBI:57287"/>
        <dbReference type="ChEBI" id="CHEBI:58342"/>
        <dbReference type="ChEBI" id="CHEBI:63410"/>
        <dbReference type="EC" id="2.3.1.76"/>
    </reaction>
    <physiologicalReaction direction="left-to-right" evidence="10">
        <dbReference type="Rhea" id="RHEA:11489"/>
    </physiologicalReaction>
</comment>
<comment type="catalytic activity">
    <reaction evidence="1">
        <text>an acyl-CoA + a 1,2-diacyl-sn-glycerol = a triacyl-sn-glycerol + CoA</text>
        <dbReference type="Rhea" id="RHEA:10868"/>
        <dbReference type="ChEBI" id="CHEBI:17815"/>
        <dbReference type="ChEBI" id="CHEBI:57287"/>
        <dbReference type="ChEBI" id="CHEBI:58342"/>
        <dbReference type="ChEBI" id="CHEBI:64615"/>
        <dbReference type="EC" id="2.3.1.20"/>
    </reaction>
    <physiologicalReaction direction="left-to-right" evidence="1">
        <dbReference type="Rhea" id="RHEA:10869"/>
    </physiologicalReaction>
</comment>
<comment type="catalytic activity">
    <reaction evidence="5">
        <text>9-cis-retinol + a fatty acyl-CoA = 9-cis-retinyl ester + CoA</text>
        <dbReference type="Rhea" id="RHEA:78263"/>
        <dbReference type="ChEBI" id="CHEBI:57287"/>
        <dbReference type="ChEBI" id="CHEBI:77636"/>
        <dbReference type="ChEBI" id="CHEBI:78272"/>
        <dbReference type="ChEBI" id="CHEBI:195360"/>
    </reaction>
    <physiologicalReaction direction="left-to-right" evidence="10">
        <dbReference type="Rhea" id="RHEA:78264"/>
    </physiologicalReaction>
</comment>
<comment type="catalytic activity">
    <reaction evidence="5">
        <text>11-cis-retinol + a fatty acyl-CoA = 11-cis-retinyl ester + CoA</text>
        <dbReference type="Rhea" id="RHEA:77767"/>
        <dbReference type="ChEBI" id="CHEBI:16302"/>
        <dbReference type="ChEBI" id="CHEBI:57287"/>
        <dbReference type="ChEBI" id="CHEBI:77636"/>
        <dbReference type="ChEBI" id="CHEBI:195358"/>
    </reaction>
    <physiologicalReaction direction="left-to-right" evidence="10">
        <dbReference type="Rhea" id="RHEA:77768"/>
    </physiologicalReaction>
</comment>
<comment type="catalytic activity">
    <reaction evidence="5">
        <text>13-cis-retinol + a fatty acyl-CoA = 13-cis-retinyl ester + CoA</text>
        <dbReference type="Rhea" id="RHEA:77771"/>
        <dbReference type="ChEBI" id="CHEBI:45479"/>
        <dbReference type="ChEBI" id="CHEBI:57287"/>
        <dbReference type="ChEBI" id="CHEBI:77636"/>
        <dbReference type="ChEBI" id="CHEBI:195359"/>
    </reaction>
    <physiologicalReaction direction="left-to-right" evidence="10">
        <dbReference type="Rhea" id="RHEA:77772"/>
    </physiologicalReaction>
</comment>
<comment type="catalytic activity">
    <reaction evidence="1">
        <text>a 1-acylglycerol + an acyl-CoA = a 1,2-diacylglycerol + CoA</text>
        <dbReference type="Rhea" id="RHEA:39943"/>
        <dbReference type="ChEBI" id="CHEBI:35759"/>
        <dbReference type="ChEBI" id="CHEBI:49172"/>
        <dbReference type="ChEBI" id="CHEBI:57287"/>
        <dbReference type="ChEBI" id="CHEBI:58342"/>
    </reaction>
    <physiologicalReaction direction="left-to-right" evidence="1">
        <dbReference type="Rhea" id="RHEA:39944"/>
    </physiologicalReaction>
</comment>
<comment type="catalytic activity">
    <reaction evidence="1">
        <text>1-O-alkylglycerol + an acyl-CoA = 1-O-alkyl-3-acylglycerol + CoA</text>
        <dbReference type="Rhea" id="RHEA:77627"/>
        <dbReference type="ChEBI" id="CHEBI:57287"/>
        <dbReference type="ChEBI" id="CHEBI:58342"/>
        <dbReference type="ChEBI" id="CHEBI:76225"/>
        <dbReference type="ChEBI" id="CHEBI:77997"/>
    </reaction>
    <physiologicalReaction direction="left-to-right" evidence="1">
        <dbReference type="Rhea" id="RHEA:77628"/>
    </physiologicalReaction>
</comment>
<comment type="catalytic activity">
    <reaction evidence="1">
        <text>a 2-acylglycerol + an acyl-CoA = a 1,2-diacyl-sn-glycerol + CoA</text>
        <dbReference type="Rhea" id="RHEA:32947"/>
        <dbReference type="ChEBI" id="CHEBI:17389"/>
        <dbReference type="ChEBI" id="CHEBI:17815"/>
        <dbReference type="ChEBI" id="CHEBI:57287"/>
        <dbReference type="ChEBI" id="CHEBI:58342"/>
    </reaction>
    <physiologicalReaction direction="left-to-right" evidence="1">
        <dbReference type="Rhea" id="RHEA:32948"/>
    </physiologicalReaction>
</comment>
<comment type="catalytic activity">
    <reaction evidence="1">
        <text>2-(9Z-octadecenoyl)-glycerol + hexadecanoyl-CoA = 1-hexadecanoyl-2-(9Z-octadecenoyl)-sn-glycerol + CoA</text>
        <dbReference type="Rhea" id="RHEA:38071"/>
        <dbReference type="ChEBI" id="CHEBI:57287"/>
        <dbReference type="ChEBI" id="CHEBI:57379"/>
        <dbReference type="ChEBI" id="CHEBI:73990"/>
        <dbReference type="ChEBI" id="CHEBI:75466"/>
    </reaction>
    <physiologicalReaction direction="left-to-right" evidence="1">
        <dbReference type="Rhea" id="RHEA:38072"/>
    </physiologicalReaction>
</comment>
<comment type="catalytic activity">
    <reaction evidence="1">
        <text>1,2-di-(9Z-octadecenoyl)-sn-glycerol + hexadecanoyl-CoA = 1,2-di-(9Z)-octadecenoyl-3-hexadecanoyl-sn-glycerol + CoA</text>
        <dbReference type="Rhea" id="RHEA:38163"/>
        <dbReference type="ChEBI" id="CHEBI:52333"/>
        <dbReference type="ChEBI" id="CHEBI:57287"/>
        <dbReference type="ChEBI" id="CHEBI:57379"/>
        <dbReference type="ChEBI" id="CHEBI:75583"/>
    </reaction>
    <physiologicalReaction direction="left-to-right" evidence="1">
        <dbReference type="Rhea" id="RHEA:38164"/>
    </physiologicalReaction>
</comment>
<comment type="catalytic activity">
    <reaction evidence="1">
        <text>hexadecan-1-ol + hexadecanoyl-CoA = hexadecanyl hexadecanoate + CoA</text>
        <dbReference type="Rhea" id="RHEA:38167"/>
        <dbReference type="ChEBI" id="CHEBI:16125"/>
        <dbReference type="ChEBI" id="CHEBI:57287"/>
        <dbReference type="ChEBI" id="CHEBI:57379"/>
        <dbReference type="ChEBI" id="CHEBI:75584"/>
    </reaction>
    <physiologicalReaction direction="left-to-right" evidence="1">
        <dbReference type="Rhea" id="RHEA:38168"/>
    </physiologicalReaction>
</comment>
<comment type="catalytic activity">
    <reaction evidence="1">
        <text>hexadecane-1,2-diol + hexadecanoyl-CoA = 2-hydroxyhexadecyl hexadecanoate + CoA</text>
        <dbReference type="Rhea" id="RHEA:38171"/>
        <dbReference type="ChEBI" id="CHEBI:57287"/>
        <dbReference type="ChEBI" id="CHEBI:57379"/>
        <dbReference type="ChEBI" id="CHEBI:75586"/>
        <dbReference type="ChEBI" id="CHEBI:75587"/>
    </reaction>
    <physiologicalReaction direction="left-to-right" evidence="1">
        <dbReference type="Rhea" id="RHEA:38172"/>
    </physiologicalReaction>
</comment>
<comment type="catalytic activity">
    <reaction evidence="1">
        <text>all-trans-retinol + hexadecanoyl-CoA = all-trans-retinyl hexadecanoate + CoA</text>
        <dbReference type="Rhea" id="RHEA:38175"/>
        <dbReference type="ChEBI" id="CHEBI:17336"/>
        <dbReference type="ChEBI" id="CHEBI:17616"/>
        <dbReference type="ChEBI" id="CHEBI:57287"/>
        <dbReference type="ChEBI" id="CHEBI:57379"/>
    </reaction>
    <physiologicalReaction direction="left-to-right" evidence="1">
        <dbReference type="Rhea" id="RHEA:38176"/>
    </physiologicalReaction>
</comment>
<comment type="catalytic activity">
    <reaction evidence="1">
        <text>1,2-di-(9Z-octadecenoyl)-sn-glycerol + (9Z)-octadecenoyl-CoA = 1,2,3-tri-(9Z-octadecenoyl)-glycerol + CoA</text>
        <dbReference type="Rhea" id="RHEA:38219"/>
        <dbReference type="ChEBI" id="CHEBI:52333"/>
        <dbReference type="ChEBI" id="CHEBI:53753"/>
        <dbReference type="ChEBI" id="CHEBI:57287"/>
        <dbReference type="ChEBI" id="CHEBI:57387"/>
    </reaction>
    <physiologicalReaction direction="left-to-right" evidence="1">
        <dbReference type="Rhea" id="RHEA:38220"/>
    </physiologicalReaction>
</comment>
<comment type="catalytic activity">
    <reaction evidence="1">
        <text>hexadecan-1-ol + (9Z)-octadecenoyl-CoA = hexadecanyl (9Z)-octadecenoate + CoA</text>
        <dbReference type="Rhea" id="RHEA:38227"/>
        <dbReference type="ChEBI" id="CHEBI:16125"/>
        <dbReference type="ChEBI" id="CHEBI:57287"/>
        <dbReference type="ChEBI" id="CHEBI:57387"/>
        <dbReference type="ChEBI" id="CHEBI:75622"/>
    </reaction>
    <physiologicalReaction direction="left-to-right" evidence="1">
        <dbReference type="Rhea" id="RHEA:38228"/>
    </physiologicalReaction>
</comment>
<comment type="catalytic activity">
    <reaction evidence="1">
        <text>(9Z)-hexadecen-1-ol + (9Z)-octadecenoyl-CoA = 1-O-(9Z)-hexadecenyl (9Z)-octadecenoate + CoA</text>
        <dbReference type="Rhea" id="RHEA:38231"/>
        <dbReference type="ChEBI" id="CHEBI:57287"/>
        <dbReference type="ChEBI" id="CHEBI:57387"/>
        <dbReference type="ChEBI" id="CHEBI:75623"/>
        <dbReference type="ChEBI" id="CHEBI:75624"/>
    </reaction>
</comment>
<comment type="catalytic activity">
    <reaction evidence="1">
        <text>octadecan-1-ol + (9Z)-octadecenoyl-CoA = 1-O-octadecyl (9Z)-octadecenoate + CoA</text>
        <dbReference type="Rhea" id="RHEA:38235"/>
        <dbReference type="ChEBI" id="CHEBI:32154"/>
        <dbReference type="ChEBI" id="CHEBI:57287"/>
        <dbReference type="ChEBI" id="CHEBI:57387"/>
        <dbReference type="ChEBI" id="CHEBI:75625"/>
    </reaction>
    <physiologicalReaction direction="left-to-right" evidence="1">
        <dbReference type="Rhea" id="RHEA:38236"/>
    </physiologicalReaction>
</comment>
<comment type="catalytic activity">
    <reaction evidence="1">
        <text>(9Z)-octadecen-1-ol + (9Z)-octadecenoyl-CoA = 1-O-(9Z)-octadecenyl (9Z)-octadecenoate + CoA</text>
        <dbReference type="Rhea" id="RHEA:38239"/>
        <dbReference type="ChEBI" id="CHEBI:57287"/>
        <dbReference type="ChEBI" id="CHEBI:57387"/>
        <dbReference type="ChEBI" id="CHEBI:73504"/>
        <dbReference type="ChEBI" id="CHEBI:75626"/>
    </reaction>
    <physiologicalReaction direction="left-to-right" evidence="1">
        <dbReference type="Rhea" id="RHEA:38240"/>
    </physiologicalReaction>
</comment>
<comment type="catalytic activity">
    <reaction evidence="1">
        <text>hexadecan-1-ol + (9Z)-hexadecenoyl-CoA = 1-O-hexadecyl (9Z)-hexadecenoate + CoA</text>
        <dbReference type="Rhea" id="RHEA:38247"/>
        <dbReference type="ChEBI" id="CHEBI:16125"/>
        <dbReference type="ChEBI" id="CHEBI:57287"/>
        <dbReference type="ChEBI" id="CHEBI:61540"/>
        <dbReference type="ChEBI" id="CHEBI:75629"/>
    </reaction>
</comment>
<comment type="catalytic activity">
    <reaction evidence="1">
        <text>hexadecan-1-ol + octadecanoyl-CoA = hexadecanyl octadecanoate + CoA</text>
        <dbReference type="Rhea" id="RHEA:38251"/>
        <dbReference type="ChEBI" id="CHEBI:16125"/>
        <dbReference type="ChEBI" id="CHEBI:57287"/>
        <dbReference type="ChEBI" id="CHEBI:57394"/>
        <dbReference type="ChEBI" id="CHEBI:75631"/>
    </reaction>
    <physiologicalReaction direction="left-to-right" evidence="1">
        <dbReference type="Rhea" id="RHEA:38252"/>
    </physiologicalReaction>
</comment>
<comment type="catalytic activity">
    <reaction evidence="1">
        <text>11-cis-retinol + hexadecanoyl-CoA = 11-cis-retinyl hexadecanoate + CoA</text>
        <dbReference type="Rhea" id="RHEA:55324"/>
        <dbReference type="ChEBI" id="CHEBI:16254"/>
        <dbReference type="ChEBI" id="CHEBI:16302"/>
        <dbReference type="ChEBI" id="CHEBI:57287"/>
        <dbReference type="ChEBI" id="CHEBI:57379"/>
    </reaction>
    <physiologicalReaction direction="left-to-right" evidence="1">
        <dbReference type="Rhea" id="RHEA:55325"/>
    </physiologicalReaction>
</comment>
<comment type="catalytic activity">
    <reaction evidence="1">
        <text>1-O-(9Z-octadecenyl)-glycerol + (9Z)-octadecenoyl-CoA = 1-O-(9Z-octadecyl)-3-(9Z-octadecenoyl)-glycerol + CoA</text>
        <dbReference type="Rhea" id="RHEA:55340"/>
        <dbReference type="ChEBI" id="CHEBI:34116"/>
        <dbReference type="ChEBI" id="CHEBI:57287"/>
        <dbReference type="ChEBI" id="CHEBI:57387"/>
        <dbReference type="ChEBI" id="CHEBI:197429"/>
    </reaction>
    <physiologicalReaction direction="left-to-right" evidence="1">
        <dbReference type="Rhea" id="RHEA:55341"/>
    </physiologicalReaction>
</comment>
<comment type="catalytic activity">
    <reaction evidence="1">
        <text>1-(9Z-octadecenoyl)-glycerol + (9Z)-octadecenoyl-CoA = 1,2-di-(9Z-octadecenoyl)-glycerol + CoA</text>
        <dbReference type="Rhea" id="RHEA:37915"/>
        <dbReference type="ChEBI" id="CHEBI:52323"/>
        <dbReference type="ChEBI" id="CHEBI:57287"/>
        <dbReference type="ChEBI" id="CHEBI:57387"/>
        <dbReference type="ChEBI" id="CHEBI:75342"/>
    </reaction>
    <physiologicalReaction direction="left-to-right" evidence="1">
        <dbReference type="Rhea" id="RHEA:37916"/>
    </physiologicalReaction>
</comment>
<comment type="catalytic activity">
    <reaction evidence="5">
        <text>11-cis-retinol + tetradecanoyl-CoA = 11-cis-retinyl tetradecanoate + CoA</text>
        <dbReference type="Rhea" id="RHEA:55272"/>
        <dbReference type="ChEBI" id="CHEBI:16302"/>
        <dbReference type="ChEBI" id="CHEBI:57287"/>
        <dbReference type="ChEBI" id="CHEBI:57385"/>
        <dbReference type="ChEBI" id="CHEBI:138676"/>
    </reaction>
    <physiologicalReaction direction="left-to-right" evidence="10">
        <dbReference type="Rhea" id="RHEA:55273"/>
    </physiologicalReaction>
</comment>
<comment type="catalytic activity">
    <reaction evidence="5">
        <text>9-cis-retinol + tetradecanoyl-CoA = 9-cis-retinyl tetradecanoate + CoA</text>
        <dbReference type="Rhea" id="RHEA:55276"/>
        <dbReference type="ChEBI" id="CHEBI:57287"/>
        <dbReference type="ChEBI" id="CHEBI:57385"/>
        <dbReference type="ChEBI" id="CHEBI:78272"/>
        <dbReference type="ChEBI" id="CHEBI:138691"/>
    </reaction>
    <physiologicalReaction direction="left-to-right" evidence="10">
        <dbReference type="Rhea" id="RHEA:55277"/>
    </physiologicalReaction>
</comment>
<comment type="catalytic activity">
    <reaction evidence="1">
        <text>9-cis-retinol + hexadecanoyl-CoA = 9-cis-retinyl hexadecanoate + CoA</text>
        <dbReference type="Rhea" id="RHEA:55328"/>
        <dbReference type="ChEBI" id="CHEBI:57287"/>
        <dbReference type="ChEBI" id="CHEBI:57379"/>
        <dbReference type="ChEBI" id="CHEBI:78272"/>
        <dbReference type="ChEBI" id="CHEBI:138725"/>
    </reaction>
    <physiologicalReaction direction="left-to-right" evidence="1">
        <dbReference type="Rhea" id="RHEA:55329"/>
    </physiologicalReaction>
</comment>
<comment type="catalytic activity">
    <reaction evidence="5">
        <text>13-cis-retinol + tetradecanoyl-CoA = 13-cis-retinyl tetradecanoate + CoA</text>
        <dbReference type="Rhea" id="RHEA:55280"/>
        <dbReference type="ChEBI" id="CHEBI:45479"/>
        <dbReference type="ChEBI" id="CHEBI:57287"/>
        <dbReference type="ChEBI" id="CHEBI:57385"/>
        <dbReference type="ChEBI" id="CHEBI:138704"/>
    </reaction>
    <physiologicalReaction direction="left-to-right" evidence="10">
        <dbReference type="Rhea" id="RHEA:55281"/>
    </physiologicalReaction>
</comment>
<comment type="catalytic activity">
    <reaction evidence="5">
        <text>all-trans-retinol + tetradecanoyl-CoA = all-trans-retinyl tetradecanoate + CoA</text>
        <dbReference type="Rhea" id="RHEA:55284"/>
        <dbReference type="ChEBI" id="CHEBI:17336"/>
        <dbReference type="ChEBI" id="CHEBI:57287"/>
        <dbReference type="ChEBI" id="CHEBI:57385"/>
        <dbReference type="ChEBI" id="CHEBI:138718"/>
    </reaction>
    <physiologicalReaction direction="left-to-right" evidence="10">
        <dbReference type="Rhea" id="RHEA:55285"/>
    </physiologicalReaction>
</comment>
<comment type="catalytic activity">
    <reaction evidence="5">
        <text>tetradecan-1-ol + tetradecanoyl-CoA = tetradecanyl tetradecanoate + CoA</text>
        <dbReference type="Rhea" id="RHEA:55288"/>
        <dbReference type="ChEBI" id="CHEBI:57287"/>
        <dbReference type="ChEBI" id="CHEBI:57385"/>
        <dbReference type="ChEBI" id="CHEBI:77417"/>
        <dbReference type="ChEBI" id="CHEBI:138721"/>
    </reaction>
    <physiologicalReaction direction="left-to-right" evidence="10">
        <dbReference type="Rhea" id="RHEA:55289"/>
    </physiologicalReaction>
</comment>
<comment type="activity regulation">
    <text evidence="5">11-cis retinoids act as allosteric modulators of acyl-CoA retinol O-fatty-acyltransferase (ARAT) activity by suppressing esterification of 9-cis, 13-cis, or all-trans retinols concurrently increasing the enzyme specificity toward 11-cis isomer.</text>
</comment>
<comment type="biophysicochemical properties">
    <kinetics>
        <KM evidence="5">26.22 uM for 11-cis-retinol</KM>
        <KM evidence="5">22.25 uM for 9-cis-retinol</KM>
        <KM evidence="5">24.32 uM for 9-cis-retinol (in the presence of 2 uM of 11-cis-retinyl palmitate)</KM>
        <KM evidence="5">21.87 uM for 9-cis-retinol (in the presence of 4 uM of 11-cis-retinyl palmitate)</KM>
        <KM evidence="5">18.74 uM for 9-cis-retinol (in the presence of 6 uM of 11-cis-retinyl palmitate)</KM>
        <KM evidence="5">15.26 uM for 9-cis-retinol (in the presence of 10 uM of 11-cis-retinyl palmitate)</KM>
        <KM evidence="5">35.18 uM for 13-cis-retinol</KM>
        <KM evidence="5">23.59 uM for all-trans-retinol</KM>
        <Vmax evidence="5">14.52 nmol/min/mg enzyme for 11-cis-retinol</Vmax>
        <Vmax evidence="5">4.53 nmol/min/mg enzyme for 9-cis-retinol</Vmax>
        <Vmax evidence="5">3.81 nmol/min/mg enzyme for 9-cis-retinol (in the presence of 2 uM of 11-cis-retinyl palmitate)</Vmax>
        <Vmax evidence="5">2.61 nmol/min/mg enzyme for 9-cis-retinol (in the presence of 4 uM of 11-cis-retinyl palmitate)</Vmax>
        <Vmax evidence="5">1.82 nmol/min/mg enzyme for 9-cis-retinol (in the presence of 6 uM of 11-cis-retinyl palmitate)</Vmax>
        <Vmax evidence="5">0.96 nmol/min/mg enzyme for 9-cis-retinol (in the presence of 10 uM of 11-cis-retinyl palmitate)</Vmax>
        <Vmax evidence="5">1.06 nmol/min/mg enzyme for 13-cis-retinol</Vmax>
        <Vmax evidence="5">0.66 nmol/min/mg enzyme for all-trans-retinol</Vmax>
    </kinetics>
</comment>
<comment type="subunit">
    <text evidence="5">Monomer.</text>
</comment>
<comment type="subcellular location">
    <subcellularLocation>
        <location evidence="3">Endoplasmic reticulum membrane</location>
        <topology evidence="2">Multi-pass membrane protein</topology>
    </subcellularLocation>
</comment>
<comment type="alternative products">
    <event type="alternative splicing"/>
    <isoform>
        <id>Q6E1M8-1</id>
        <name>1</name>
        <sequence type="displayed"/>
    </isoform>
    <isoform>
        <id>Q6E1M8-2</id>
        <name>2</name>
        <sequence type="described" ref="VSP_020357"/>
    </isoform>
</comment>
<comment type="tissue specificity">
    <text evidence="3 4">Expressed in Mueller cells of the retina (at protein level) (PubMed:24799687). Abundant in tissues rich in sebaceous glands such as the preputial gland and eyelid (PubMed:15220349).</text>
</comment>
<comment type="similarity">
    <text evidence="8">Belongs to the diacylglycerol acyltransferase family.</text>
</comment>
<gene>
    <name type="primary">Awat2</name>
    <name type="synonym">Dgat2l4</name>
    <name type="synonym">Ws</name>
</gene>
<accession>Q6E1M8</accession>
<accession>Q8BM49</accession>
<proteinExistence type="evidence at protein level"/>
<dbReference type="EC" id="2.3.1.75" evidence="3 5"/>
<dbReference type="EC" id="2.3.1.76" evidence="5"/>
<dbReference type="EC" id="2.3.1.20" evidence="1"/>
<dbReference type="EMBL" id="AY611031">
    <property type="protein sequence ID" value="AAT68765.1"/>
    <property type="molecule type" value="mRNA"/>
</dbReference>
<dbReference type="EMBL" id="AY611032">
    <property type="protein sequence ID" value="AAT68766.1"/>
    <property type="molecule type" value="mRNA"/>
</dbReference>
<dbReference type="EMBL" id="AK034920">
    <property type="protein sequence ID" value="BAC28882.1"/>
    <property type="molecule type" value="mRNA"/>
</dbReference>
<dbReference type="CCDS" id="CCDS30300.1">
    <molecule id="Q6E1M8-1"/>
</dbReference>
<dbReference type="CCDS" id="CCDS72412.1">
    <molecule id="Q6E1M8-2"/>
</dbReference>
<dbReference type="RefSeq" id="NP_001277324.1">
    <molecule id="Q6E1M8-2"/>
    <property type="nucleotide sequence ID" value="NM_001290395.1"/>
</dbReference>
<dbReference type="RefSeq" id="NP_808414.2">
    <molecule id="Q6E1M8-1"/>
    <property type="nucleotide sequence ID" value="NM_177746.4"/>
</dbReference>
<dbReference type="RefSeq" id="XP_011245890.1">
    <molecule id="Q6E1M8-2"/>
    <property type="nucleotide sequence ID" value="XM_011247588.3"/>
</dbReference>
<dbReference type="RefSeq" id="XP_011245892.1">
    <molecule id="Q6E1M8-2"/>
    <property type="nucleotide sequence ID" value="XM_011247590.4"/>
</dbReference>
<dbReference type="RefSeq" id="XP_011245893.1">
    <molecule id="Q6E1M8-2"/>
    <property type="nucleotide sequence ID" value="XM_011247591.3"/>
</dbReference>
<dbReference type="RefSeq" id="XP_011245894.1">
    <molecule id="Q6E1M8-2"/>
    <property type="nucleotide sequence ID" value="XM_011247592.4"/>
</dbReference>
<dbReference type="RefSeq" id="XP_017173978.1">
    <molecule id="Q6E1M8-2"/>
    <property type="nucleotide sequence ID" value="XM_017318489.3"/>
</dbReference>
<dbReference type="RefSeq" id="XP_036017848.1">
    <molecule id="Q6E1M8-2"/>
    <property type="nucleotide sequence ID" value="XM_036161955.1"/>
</dbReference>
<dbReference type="FunCoup" id="Q6E1M8">
    <property type="interactions" value="224"/>
</dbReference>
<dbReference type="STRING" id="10090.ENSMUSP00000033567"/>
<dbReference type="SwissLipids" id="SLP:000001829"/>
<dbReference type="PhosphoSitePlus" id="Q6E1M8"/>
<dbReference type="PaxDb" id="10090-ENSMUSP00000033567"/>
<dbReference type="ProteomicsDB" id="273508">
    <molecule id="Q6E1M8-1"/>
</dbReference>
<dbReference type="ProteomicsDB" id="273509">
    <molecule id="Q6E1M8-2"/>
</dbReference>
<dbReference type="Antibodypedia" id="55918">
    <property type="antibodies" value="98 antibodies from 22 providers"/>
</dbReference>
<dbReference type="Ensembl" id="ENSMUST00000033567.15">
    <molecule id="Q6E1M8-1"/>
    <property type="protein sequence ID" value="ENSMUSP00000033567.9"/>
    <property type="gene ID" value="ENSMUSG00000031220.15"/>
</dbReference>
<dbReference type="Ensembl" id="ENSMUST00000147103.2">
    <molecule id="Q6E1M8-2"/>
    <property type="protein sequence ID" value="ENSMUSP00000128516.2"/>
    <property type="gene ID" value="ENSMUSG00000031220.15"/>
</dbReference>
<dbReference type="GeneID" id="245532"/>
<dbReference type="KEGG" id="mmu:245532"/>
<dbReference type="UCSC" id="uc009tvx.2">
    <molecule id="Q6E1M8-1"/>
    <property type="organism name" value="mouse"/>
</dbReference>
<dbReference type="AGR" id="MGI:3045345"/>
<dbReference type="CTD" id="158835"/>
<dbReference type="MGI" id="MGI:3045345">
    <property type="gene designation" value="Awat2"/>
</dbReference>
<dbReference type="VEuPathDB" id="HostDB:ENSMUSG00000031220"/>
<dbReference type="eggNOG" id="KOG0831">
    <property type="taxonomic scope" value="Eukaryota"/>
</dbReference>
<dbReference type="GeneTree" id="ENSGT01030000234582"/>
<dbReference type="HOGENOM" id="CLU_023995_0_0_1"/>
<dbReference type="InParanoid" id="Q6E1M8"/>
<dbReference type="OMA" id="RMVHIYP"/>
<dbReference type="OrthoDB" id="264532at2759"/>
<dbReference type="PhylomeDB" id="Q6E1M8"/>
<dbReference type="TreeFam" id="TF314707"/>
<dbReference type="BRENDA" id="2.3.1.75">
    <property type="organism ID" value="3474"/>
</dbReference>
<dbReference type="Reactome" id="R-MMU-1482883">
    <property type="pathway name" value="Acyl chain remodeling of DAG and TAG"/>
</dbReference>
<dbReference type="Reactome" id="R-MMU-2187335">
    <property type="pathway name" value="The retinoid cycle in cones (daylight vision)"/>
</dbReference>
<dbReference type="Reactome" id="R-MMU-9640463">
    <property type="pathway name" value="Wax biosynthesis"/>
</dbReference>
<dbReference type="BioGRID-ORCS" id="245532">
    <property type="hits" value="3 hits in 79 CRISPR screens"/>
</dbReference>
<dbReference type="PRO" id="PR:Q6E1M8"/>
<dbReference type="Proteomes" id="UP000000589">
    <property type="component" value="Chromosome X"/>
</dbReference>
<dbReference type="RNAct" id="Q6E1M8">
    <property type="molecule type" value="protein"/>
</dbReference>
<dbReference type="Bgee" id="ENSMUSG00000031220">
    <property type="expression patterns" value="Expressed in lip and 49 other cell types or tissues"/>
</dbReference>
<dbReference type="ExpressionAtlas" id="Q6E1M8">
    <property type="expression patterns" value="baseline and differential"/>
</dbReference>
<dbReference type="GO" id="GO:0005789">
    <property type="term" value="C:endoplasmic reticulum membrane"/>
    <property type="evidence" value="ECO:0000314"/>
    <property type="project" value="MGI"/>
</dbReference>
<dbReference type="GO" id="GO:0003846">
    <property type="term" value="F:2-acylglycerol O-acyltransferase activity"/>
    <property type="evidence" value="ECO:0007669"/>
    <property type="project" value="RHEA"/>
</dbReference>
<dbReference type="GO" id="GO:0004144">
    <property type="term" value="F:diacylglycerol O-acyltransferase activity"/>
    <property type="evidence" value="ECO:0007669"/>
    <property type="project" value="RHEA"/>
</dbReference>
<dbReference type="GO" id="GO:0047196">
    <property type="term" value="F:long-chain-alcohol O-fatty-acyltransferase activity"/>
    <property type="evidence" value="ECO:0007669"/>
    <property type="project" value="UniProtKB-EC"/>
</dbReference>
<dbReference type="GO" id="GO:0050252">
    <property type="term" value="F:retinol O-fatty-acyltransferase activity"/>
    <property type="evidence" value="ECO:0000314"/>
    <property type="project" value="UniProtKB"/>
</dbReference>
<dbReference type="GO" id="GO:0006640">
    <property type="term" value="P:monoacylglycerol biosynthetic process"/>
    <property type="evidence" value="ECO:0000250"/>
    <property type="project" value="UniProtKB"/>
</dbReference>
<dbReference type="GO" id="GO:0010025">
    <property type="term" value="P:wax biosynthetic process"/>
    <property type="evidence" value="ECO:0000314"/>
    <property type="project" value="MGI"/>
</dbReference>
<dbReference type="CDD" id="cd07987">
    <property type="entry name" value="LPLAT_MGAT-like"/>
    <property type="match status" value="1"/>
</dbReference>
<dbReference type="InterPro" id="IPR007130">
    <property type="entry name" value="DAGAT"/>
</dbReference>
<dbReference type="PANTHER" id="PTHR12317:SF12">
    <property type="entry name" value="ACYL-COA WAX ALCOHOL ACYLTRANSFERASE 2"/>
    <property type="match status" value="1"/>
</dbReference>
<dbReference type="PANTHER" id="PTHR12317">
    <property type="entry name" value="DIACYLGLYCEROL O-ACYLTRANSFERASE"/>
    <property type="match status" value="1"/>
</dbReference>
<dbReference type="Pfam" id="PF03982">
    <property type="entry name" value="DAGAT"/>
    <property type="match status" value="1"/>
</dbReference>
<evidence type="ECO:0000250" key="1">
    <source>
        <dbReference type="UniProtKB" id="Q6E213"/>
    </source>
</evidence>
<evidence type="ECO:0000255" key="2"/>
<evidence type="ECO:0000269" key="3">
    <source>
    </source>
</evidence>
<evidence type="ECO:0000269" key="4">
    <source>
    </source>
</evidence>
<evidence type="ECO:0000269" key="5">
    <source>
    </source>
</evidence>
<evidence type="ECO:0000303" key="6">
    <source>
    </source>
</evidence>
<evidence type="ECO:0000303" key="7">
    <source>
    </source>
</evidence>
<evidence type="ECO:0000305" key="8"/>
<evidence type="ECO:0000305" key="9">
    <source>
    </source>
</evidence>
<evidence type="ECO:0000305" key="10">
    <source>
    </source>
</evidence>
<keyword id="KW-0012">Acyltransferase</keyword>
<keyword id="KW-0025">Alternative splicing</keyword>
<keyword id="KW-0256">Endoplasmic reticulum</keyword>
<keyword id="KW-0444">Lipid biosynthesis</keyword>
<keyword id="KW-0443">Lipid metabolism</keyword>
<keyword id="KW-0472">Membrane</keyword>
<keyword id="KW-1185">Reference proteome</keyword>
<keyword id="KW-0808">Transferase</keyword>
<keyword id="KW-0812">Transmembrane</keyword>
<keyword id="KW-1133">Transmembrane helix</keyword>
<name>AWAT2_MOUSE</name>
<organism>
    <name type="scientific">Mus musculus</name>
    <name type="common">Mouse</name>
    <dbReference type="NCBI Taxonomy" id="10090"/>
    <lineage>
        <taxon>Eukaryota</taxon>
        <taxon>Metazoa</taxon>
        <taxon>Chordata</taxon>
        <taxon>Craniata</taxon>
        <taxon>Vertebrata</taxon>
        <taxon>Euteleostomi</taxon>
        <taxon>Mammalia</taxon>
        <taxon>Eutheria</taxon>
        <taxon>Euarchontoglires</taxon>
        <taxon>Glires</taxon>
        <taxon>Rodentia</taxon>
        <taxon>Myomorpha</taxon>
        <taxon>Muroidea</taxon>
        <taxon>Muridae</taxon>
        <taxon>Murinae</taxon>
        <taxon>Mus</taxon>
        <taxon>Mus</taxon>
    </lineage>
</organism>
<reference key="1">
    <citation type="journal article" date="2004" name="J. Biol. Chem.">
        <title>Mammalian wax biosynthesis. II. Expression cloning of wax synthase cDNAs encoding a member of the acyltransferase enzyme family.</title>
        <authorList>
            <person name="Cheng J.B."/>
            <person name="Russell D.W."/>
        </authorList>
    </citation>
    <scope>NUCLEOTIDE SEQUENCE [MRNA] (ISOFORM 1)</scope>
    <scope>FUNCTION</scope>
    <scope>CATALYTIC ACTIVITY</scope>
    <scope>SUBCELLULAR LOCATION</scope>
    <scope>TISSUE SPECIFICITY</scope>
    <source>
        <strain>C57BL/6J</strain>
    </source>
</reference>
<reference key="2">
    <citation type="journal article" date="2005" name="Science">
        <title>The transcriptional landscape of the mammalian genome.</title>
        <authorList>
            <person name="Carninci P."/>
            <person name="Kasukawa T."/>
            <person name="Katayama S."/>
            <person name="Gough J."/>
            <person name="Frith M.C."/>
            <person name="Maeda N."/>
            <person name="Oyama R."/>
            <person name="Ravasi T."/>
            <person name="Lenhard B."/>
            <person name="Wells C."/>
            <person name="Kodzius R."/>
            <person name="Shimokawa K."/>
            <person name="Bajic V.B."/>
            <person name="Brenner S.E."/>
            <person name="Batalov S."/>
            <person name="Forrest A.R."/>
            <person name="Zavolan M."/>
            <person name="Davis M.J."/>
            <person name="Wilming L.G."/>
            <person name="Aidinis V."/>
            <person name="Allen J.E."/>
            <person name="Ambesi-Impiombato A."/>
            <person name="Apweiler R."/>
            <person name="Aturaliya R.N."/>
            <person name="Bailey T.L."/>
            <person name="Bansal M."/>
            <person name="Baxter L."/>
            <person name="Beisel K.W."/>
            <person name="Bersano T."/>
            <person name="Bono H."/>
            <person name="Chalk A.M."/>
            <person name="Chiu K.P."/>
            <person name="Choudhary V."/>
            <person name="Christoffels A."/>
            <person name="Clutterbuck D.R."/>
            <person name="Crowe M.L."/>
            <person name="Dalla E."/>
            <person name="Dalrymple B.P."/>
            <person name="de Bono B."/>
            <person name="Della Gatta G."/>
            <person name="di Bernardo D."/>
            <person name="Down T."/>
            <person name="Engstrom P."/>
            <person name="Fagiolini M."/>
            <person name="Faulkner G."/>
            <person name="Fletcher C.F."/>
            <person name="Fukushima T."/>
            <person name="Furuno M."/>
            <person name="Futaki S."/>
            <person name="Gariboldi M."/>
            <person name="Georgii-Hemming P."/>
            <person name="Gingeras T.R."/>
            <person name="Gojobori T."/>
            <person name="Green R.E."/>
            <person name="Gustincich S."/>
            <person name="Harbers M."/>
            <person name="Hayashi Y."/>
            <person name="Hensch T.K."/>
            <person name="Hirokawa N."/>
            <person name="Hill D."/>
            <person name="Huminiecki L."/>
            <person name="Iacono M."/>
            <person name="Ikeo K."/>
            <person name="Iwama A."/>
            <person name="Ishikawa T."/>
            <person name="Jakt M."/>
            <person name="Kanapin A."/>
            <person name="Katoh M."/>
            <person name="Kawasawa Y."/>
            <person name="Kelso J."/>
            <person name="Kitamura H."/>
            <person name="Kitano H."/>
            <person name="Kollias G."/>
            <person name="Krishnan S.P."/>
            <person name="Kruger A."/>
            <person name="Kummerfeld S.K."/>
            <person name="Kurochkin I.V."/>
            <person name="Lareau L.F."/>
            <person name="Lazarevic D."/>
            <person name="Lipovich L."/>
            <person name="Liu J."/>
            <person name="Liuni S."/>
            <person name="McWilliam S."/>
            <person name="Madan Babu M."/>
            <person name="Madera M."/>
            <person name="Marchionni L."/>
            <person name="Matsuda H."/>
            <person name="Matsuzawa S."/>
            <person name="Miki H."/>
            <person name="Mignone F."/>
            <person name="Miyake S."/>
            <person name="Morris K."/>
            <person name="Mottagui-Tabar S."/>
            <person name="Mulder N."/>
            <person name="Nakano N."/>
            <person name="Nakauchi H."/>
            <person name="Ng P."/>
            <person name="Nilsson R."/>
            <person name="Nishiguchi S."/>
            <person name="Nishikawa S."/>
            <person name="Nori F."/>
            <person name="Ohara O."/>
            <person name="Okazaki Y."/>
            <person name="Orlando V."/>
            <person name="Pang K.C."/>
            <person name="Pavan W.J."/>
            <person name="Pavesi G."/>
            <person name="Pesole G."/>
            <person name="Petrovsky N."/>
            <person name="Piazza S."/>
            <person name="Reed J."/>
            <person name="Reid J.F."/>
            <person name="Ring B.Z."/>
            <person name="Ringwald M."/>
            <person name="Rost B."/>
            <person name="Ruan Y."/>
            <person name="Salzberg S.L."/>
            <person name="Sandelin A."/>
            <person name="Schneider C."/>
            <person name="Schoenbach C."/>
            <person name="Sekiguchi K."/>
            <person name="Semple C.A."/>
            <person name="Seno S."/>
            <person name="Sessa L."/>
            <person name="Sheng Y."/>
            <person name="Shibata Y."/>
            <person name="Shimada H."/>
            <person name="Shimada K."/>
            <person name="Silva D."/>
            <person name="Sinclair B."/>
            <person name="Sperling S."/>
            <person name="Stupka E."/>
            <person name="Sugiura K."/>
            <person name="Sultana R."/>
            <person name="Takenaka Y."/>
            <person name="Taki K."/>
            <person name="Tammoja K."/>
            <person name="Tan S.L."/>
            <person name="Tang S."/>
            <person name="Taylor M.S."/>
            <person name="Tegner J."/>
            <person name="Teichmann S.A."/>
            <person name="Ueda H.R."/>
            <person name="van Nimwegen E."/>
            <person name="Verardo R."/>
            <person name="Wei C.L."/>
            <person name="Yagi K."/>
            <person name="Yamanishi H."/>
            <person name="Zabarovsky E."/>
            <person name="Zhu S."/>
            <person name="Zimmer A."/>
            <person name="Hide W."/>
            <person name="Bult C."/>
            <person name="Grimmond S.M."/>
            <person name="Teasdale R.D."/>
            <person name="Liu E.T."/>
            <person name="Brusic V."/>
            <person name="Quackenbush J."/>
            <person name="Wahlestedt C."/>
            <person name="Mattick J.S."/>
            <person name="Hume D.A."/>
            <person name="Kai C."/>
            <person name="Sasaki D."/>
            <person name="Tomaru Y."/>
            <person name="Fukuda S."/>
            <person name="Kanamori-Katayama M."/>
            <person name="Suzuki M."/>
            <person name="Aoki J."/>
            <person name="Arakawa T."/>
            <person name="Iida J."/>
            <person name="Imamura K."/>
            <person name="Itoh M."/>
            <person name="Kato T."/>
            <person name="Kawaji H."/>
            <person name="Kawagashira N."/>
            <person name="Kawashima T."/>
            <person name="Kojima M."/>
            <person name="Kondo S."/>
            <person name="Konno H."/>
            <person name="Nakano K."/>
            <person name="Ninomiya N."/>
            <person name="Nishio T."/>
            <person name="Okada M."/>
            <person name="Plessy C."/>
            <person name="Shibata K."/>
            <person name="Shiraki T."/>
            <person name="Suzuki S."/>
            <person name="Tagami M."/>
            <person name="Waki K."/>
            <person name="Watahiki A."/>
            <person name="Okamura-Oho Y."/>
            <person name="Suzuki H."/>
            <person name="Kawai J."/>
            <person name="Hayashizaki Y."/>
        </authorList>
    </citation>
    <scope>NUCLEOTIDE SEQUENCE [LARGE SCALE MRNA] (ISOFORM 2)</scope>
    <source>
        <strain>C57BL/6J</strain>
        <tissue>Embryo</tissue>
    </source>
</reference>
<reference key="3">
    <citation type="journal article" date="2014" name="Proc. Natl. Acad. Sci. U.S.A.">
        <title>Identification of the 11-cis-specific retinyl-ester synthase in retinal Mueller cells as multifunctional O-acyltransferase (MFAT).</title>
        <authorList>
            <person name="Kaylor J.J."/>
            <person name="Cook J.D."/>
            <person name="Makshanoff J."/>
            <person name="Bischoff N."/>
            <person name="Yong J."/>
            <person name="Travis G.H."/>
        </authorList>
    </citation>
    <scope>TISSUE SPECIFICITY</scope>
</reference>
<reference key="4">
    <citation type="journal article" date="2017" name="J. Lipid Res.">
        <title>Allosteric modulation of the substrate specificity of acyl-CoA wax alcohol acyltransferase 2.</title>
        <authorList>
            <person name="Arne J.M."/>
            <person name="Widjaja-Adhi M.A."/>
            <person name="Hughes T."/>
            <person name="Huynh K.W."/>
            <person name="Silvaroli J.A."/>
            <person name="Chelstowska S."/>
            <person name="Moiseenkova-Bell V.Y."/>
            <person name="Golczak M."/>
        </authorList>
    </citation>
    <scope>FUNCTION</scope>
    <scope>CATALYTIC ACTIVITY</scope>
    <scope>BIOPHYSICOCHEMICAL PROPERTIES</scope>
    <scope>SUBUNIT</scope>
    <scope>ACTIVITY REGULATION</scope>
</reference>
<protein>
    <recommendedName>
        <fullName>Acyl-CoA wax alcohol acyltransferase 2</fullName>
        <ecNumber evidence="3 5">2.3.1.75</ecNumber>
    </recommendedName>
    <alternativeName>
        <fullName evidence="7">11-cis-specific retinyl-ester synthase</fullName>
        <shortName evidence="7">11-cis-RE-synthase</shortName>
    </alternativeName>
    <alternativeName>
        <fullName>Acyl-CoA retinol O-fatty-acyltransferase</fullName>
        <shortName>ARAT</shortName>
        <shortName>Retinol O-fatty-acyltransferase</shortName>
        <ecNumber evidence="5">2.3.1.76</ecNumber>
    </alternativeName>
    <alternativeName>
        <fullName>Diacylglycerol O-acyltransferase 2-like protein 4</fullName>
        <ecNumber evidence="1">2.3.1.20</ecNumber>
    </alternativeName>
    <alternativeName>
        <fullName>Long-chain-alcohol O-fatty-acyltransferase 2</fullName>
    </alternativeName>
    <alternativeName>
        <fullName>Wax synthase</fullName>
        <shortName>mWS</shortName>
    </alternativeName>
</protein>
<sequence length="333" mass="38145">MFWPTKKDLKTAMEVFALFQWALSALVIVTTVIIVNLYLVVFTSYWPVTVLMLTWLAFDWKTPERGGRRFTCVRKWRLWKHYSDYFPLKMVKTKDISPDRNYILVCHPHGLMAHSCFGHFATDTTGFSKTFPGITPYMLTLGAFFWVPFLRDYVMSTGSCSVSRSSMDFLLTQKGTGNMLVVVVGGLAECRYSTPGSTTLFLKKRQGFVRTALKHGVSLIPAYAFGETDLYDQHIFTPGGFVNRFQKWFQKMVHIYPCAFYGRGLTKNSWGLLPYSQPVTTVVGEPLPLPKIENPSEEIVAKYHTLYIDALRKLFDQHKTKFGISETQELVIV</sequence>